<protein>
    <recommendedName>
        <fullName evidence="1">Glycerol-3-phosphate acyltransferase</fullName>
    </recommendedName>
    <alternativeName>
        <fullName evidence="1">G3P acyltransferase</fullName>
        <shortName evidence="1">GPAT</shortName>
        <ecNumber evidence="1">2.3.1.15</ecNumber>
        <ecNumber evidence="1">2.3.1.n5</ecNumber>
    </alternativeName>
    <alternativeName>
        <fullName evidence="1">Lysophosphatidic acid synthase</fullName>
        <shortName evidence="1">LPA synthase</shortName>
    </alternativeName>
</protein>
<evidence type="ECO:0000255" key="1">
    <source>
        <dbReference type="HAMAP-Rule" id="MF_01043"/>
    </source>
</evidence>
<organism>
    <name type="scientific">Escherichia coli (strain K12 / DH10B)</name>
    <dbReference type="NCBI Taxonomy" id="316385"/>
    <lineage>
        <taxon>Bacteria</taxon>
        <taxon>Pseudomonadati</taxon>
        <taxon>Pseudomonadota</taxon>
        <taxon>Gammaproteobacteria</taxon>
        <taxon>Enterobacterales</taxon>
        <taxon>Enterobacteriaceae</taxon>
        <taxon>Escherichia</taxon>
    </lineage>
</organism>
<keyword id="KW-0997">Cell inner membrane</keyword>
<keyword id="KW-1003">Cell membrane</keyword>
<keyword id="KW-0444">Lipid biosynthesis</keyword>
<keyword id="KW-0443">Lipid metabolism</keyword>
<keyword id="KW-0472">Membrane</keyword>
<keyword id="KW-0594">Phospholipid biosynthesis</keyword>
<keyword id="KW-1208">Phospholipid metabolism</keyword>
<keyword id="KW-0808">Transferase</keyword>
<keyword id="KW-0812">Transmembrane</keyword>
<keyword id="KW-1133">Transmembrane helix</keyword>
<feature type="chain" id="PRO_1000136085" description="Glycerol-3-phosphate acyltransferase">
    <location>
        <begin position="1"/>
        <end position="205"/>
    </location>
</feature>
<feature type="topological domain" description="Periplasmic" evidence="1">
    <location>
        <begin position="1"/>
        <end position="3"/>
    </location>
</feature>
<feature type="transmembrane region" description="Helical" evidence="1">
    <location>
        <begin position="4"/>
        <end position="24"/>
    </location>
</feature>
<feature type="topological domain" description="Cytoplasmic" evidence="1">
    <location>
        <begin position="25"/>
        <end position="52"/>
    </location>
</feature>
<feature type="transmembrane region" description="Helical" evidence="1">
    <location>
        <begin position="53"/>
        <end position="73"/>
    </location>
</feature>
<feature type="topological domain" description="Periplasmic" evidence="1">
    <location>
        <begin position="74"/>
        <end position="80"/>
    </location>
</feature>
<feature type="transmembrane region" description="Helical" evidence="1">
    <location>
        <begin position="81"/>
        <end position="101"/>
    </location>
</feature>
<feature type="topological domain" description="Cytoplasmic" evidence="1">
    <location>
        <begin position="102"/>
        <end position="111"/>
    </location>
</feature>
<feature type="transmembrane region" description="Helical" evidence="1">
    <location>
        <begin position="112"/>
        <end position="132"/>
    </location>
</feature>
<feature type="topological domain" description="Periplasmic" evidence="1">
    <location>
        <begin position="133"/>
        <end position="137"/>
    </location>
</feature>
<feature type="transmembrane region" description="Helical" evidence="1">
    <location>
        <begin position="138"/>
        <end position="158"/>
    </location>
</feature>
<feature type="topological domain" description="Cytoplasmic" evidence="1">
    <location>
        <begin position="159"/>
        <end position="205"/>
    </location>
</feature>
<sequence length="205" mass="22193">MSAIAPGMILIAYLCGSISSAILVCRLCGLPDPRTSGSGNPGATNVLRIGGKGAAVAVLIFDVLKGMLPVWGAYELGVSPFWLGLIAIAACLGHIWPVFFGFKGGKGVATAFGAIAPIGWDLTGVMAGTWLLTVLLSGYSSLGAIVSALIAPFYVWWFKPQFTFPVSMLSCLILLRHHDNIQRLWRRQETKIWTKFKRKREKDPE</sequence>
<proteinExistence type="inferred from homology"/>
<name>PLSY_ECODH</name>
<gene>
    <name evidence="1" type="primary">plsY</name>
    <name type="synonym">ygiH</name>
    <name type="ordered locus">ECDH10B_3234</name>
</gene>
<comment type="function">
    <text evidence="1">Catalyzes the transfer of an acyl group from acyl-ACP to glycerol-3-phosphate (G3P) to form lysophosphatidic acid (LPA). This enzyme can also utilize acyl-CoA as fatty acyl donor, but not acyl-PO(4).</text>
</comment>
<comment type="catalytic activity">
    <reaction evidence="1">
        <text>sn-glycerol 3-phosphate + an acyl-CoA = a 1-acyl-sn-glycero-3-phosphate + CoA</text>
        <dbReference type="Rhea" id="RHEA:15325"/>
        <dbReference type="ChEBI" id="CHEBI:57287"/>
        <dbReference type="ChEBI" id="CHEBI:57597"/>
        <dbReference type="ChEBI" id="CHEBI:57970"/>
        <dbReference type="ChEBI" id="CHEBI:58342"/>
        <dbReference type="EC" id="2.3.1.15"/>
    </reaction>
</comment>
<comment type="catalytic activity">
    <reaction evidence="1">
        <text>a fatty acyl-[ACP] + sn-glycerol 3-phosphate = a 1-acyl-sn-glycero-3-phosphate + holo-[ACP]</text>
        <dbReference type="Rhea" id="RHEA:42300"/>
        <dbReference type="Rhea" id="RHEA-COMP:9685"/>
        <dbReference type="Rhea" id="RHEA-COMP:14125"/>
        <dbReference type="ChEBI" id="CHEBI:57597"/>
        <dbReference type="ChEBI" id="CHEBI:57970"/>
        <dbReference type="ChEBI" id="CHEBI:64479"/>
        <dbReference type="ChEBI" id="CHEBI:138651"/>
        <dbReference type="EC" id="2.3.1.n5"/>
    </reaction>
</comment>
<comment type="pathway">
    <text evidence="1">Lipid metabolism; phospholipid metabolism.</text>
</comment>
<comment type="subunit">
    <text evidence="1">Probably interacts with PlsX.</text>
</comment>
<comment type="subcellular location">
    <subcellularLocation>
        <location evidence="1">Cell inner membrane</location>
        <topology evidence="1">Multi-pass membrane protein</topology>
    </subcellularLocation>
</comment>
<comment type="similarity">
    <text evidence="1">Belongs to the PlsY family.</text>
</comment>
<accession>B1XG64</accession>
<dbReference type="EC" id="2.3.1.15" evidence="1"/>
<dbReference type="EC" id="2.3.1.n5" evidence="1"/>
<dbReference type="EMBL" id="CP000948">
    <property type="protein sequence ID" value="ACB04144.1"/>
    <property type="molecule type" value="Genomic_DNA"/>
</dbReference>
<dbReference type="RefSeq" id="WP_001272796.1">
    <property type="nucleotide sequence ID" value="NC_010473.1"/>
</dbReference>
<dbReference type="SMR" id="B1XG64"/>
<dbReference type="GeneID" id="93778934"/>
<dbReference type="KEGG" id="ecd:ECDH10B_3234"/>
<dbReference type="HOGENOM" id="CLU_081254_0_2_6"/>
<dbReference type="UniPathway" id="UPA00085"/>
<dbReference type="GO" id="GO:0005886">
    <property type="term" value="C:plasma membrane"/>
    <property type="evidence" value="ECO:0007669"/>
    <property type="project" value="UniProtKB-SubCell"/>
</dbReference>
<dbReference type="GO" id="GO:0043772">
    <property type="term" value="F:acyl-phosphate glycerol-3-phosphate acyltransferase activity"/>
    <property type="evidence" value="ECO:0007669"/>
    <property type="project" value="InterPro"/>
</dbReference>
<dbReference type="GO" id="GO:0004366">
    <property type="term" value="F:glycerol-3-phosphate O-acyltransferase activity"/>
    <property type="evidence" value="ECO:0007669"/>
    <property type="project" value="UniProtKB-UniRule"/>
</dbReference>
<dbReference type="GO" id="GO:0008654">
    <property type="term" value="P:phospholipid biosynthetic process"/>
    <property type="evidence" value="ECO:0007669"/>
    <property type="project" value="UniProtKB-UniRule"/>
</dbReference>
<dbReference type="HAMAP" id="MF_01043">
    <property type="entry name" value="PlsY"/>
    <property type="match status" value="1"/>
</dbReference>
<dbReference type="InterPro" id="IPR003811">
    <property type="entry name" value="G3P_acylTferase_PlsY"/>
</dbReference>
<dbReference type="NCBIfam" id="TIGR00023">
    <property type="entry name" value="glycerol-3-phosphate 1-O-acyltransferase PlsY"/>
    <property type="match status" value="1"/>
</dbReference>
<dbReference type="PANTHER" id="PTHR30309:SF0">
    <property type="entry name" value="GLYCEROL-3-PHOSPHATE ACYLTRANSFERASE-RELATED"/>
    <property type="match status" value="1"/>
</dbReference>
<dbReference type="PANTHER" id="PTHR30309">
    <property type="entry name" value="INNER MEMBRANE PROTEIN YGIH"/>
    <property type="match status" value="1"/>
</dbReference>
<dbReference type="Pfam" id="PF02660">
    <property type="entry name" value="G3P_acyltransf"/>
    <property type="match status" value="1"/>
</dbReference>
<dbReference type="SMART" id="SM01207">
    <property type="entry name" value="G3P_acyltransf"/>
    <property type="match status" value="1"/>
</dbReference>
<reference key="1">
    <citation type="journal article" date="2008" name="J. Bacteriol.">
        <title>The complete genome sequence of Escherichia coli DH10B: insights into the biology of a laboratory workhorse.</title>
        <authorList>
            <person name="Durfee T."/>
            <person name="Nelson R."/>
            <person name="Baldwin S."/>
            <person name="Plunkett G. III"/>
            <person name="Burland V."/>
            <person name="Mau B."/>
            <person name="Petrosino J.F."/>
            <person name="Qin X."/>
            <person name="Muzny D.M."/>
            <person name="Ayele M."/>
            <person name="Gibbs R.A."/>
            <person name="Csorgo B."/>
            <person name="Posfai G."/>
            <person name="Weinstock G.M."/>
            <person name="Blattner F.R."/>
        </authorList>
    </citation>
    <scope>NUCLEOTIDE SEQUENCE [LARGE SCALE GENOMIC DNA]</scope>
    <source>
        <strain>K12 / DH10B</strain>
    </source>
</reference>